<gene>
    <name type="primary">dgoK1</name>
    <name type="ordered locus">R00825</name>
    <name type="ORF">SMc00881</name>
</gene>
<keyword id="KW-0002">3D-structure</keyword>
<keyword id="KW-0067">ATP-binding</keyword>
<keyword id="KW-0418">Kinase</keyword>
<keyword id="KW-0547">Nucleotide-binding</keyword>
<keyword id="KW-1185">Reference proteome</keyword>
<keyword id="KW-0808">Transferase</keyword>
<organism>
    <name type="scientific">Rhizobium meliloti (strain 1021)</name>
    <name type="common">Ensifer meliloti</name>
    <name type="synonym">Sinorhizobium meliloti</name>
    <dbReference type="NCBI Taxonomy" id="266834"/>
    <lineage>
        <taxon>Bacteria</taxon>
        <taxon>Pseudomonadati</taxon>
        <taxon>Pseudomonadota</taxon>
        <taxon>Alphaproteobacteria</taxon>
        <taxon>Hyphomicrobiales</taxon>
        <taxon>Rhizobiaceae</taxon>
        <taxon>Sinorhizobium/Ensifer group</taxon>
        <taxon>Sinorhizobium</taxon>
    </lineage>
</organism>
<protein>
    <recommendedName>
        <fullName>Probable 2-dehydro-3-deoxygalactonokinase DgoK1</fullName>
        <ecNumber>2.7.1.58</ecNumber>
    </recommendedName>
    <alternativeName>
        <fullName>2-keto-3-deoxy-galactonokinase</fullName>
    </alternativeName>
    <alternativeName>
        <fullName>2-oxo-3-deoxygalactonate kinase</fullName>
    </alternativeName>
</protein>
<feature type="chain" id="PRO_0000428931" description="Probable 2-dehydro-3-deoxygalactonokinase DgoK1">
    <location>
        <begin position="1"/>
        <end position="306"/>
    </location>
</feature>
<feature type="strand" evidence="4">
    <location>
        <begin position="7"/>
        <end position="12"/>
    </location>
</feature>
<feature type="strand" evidence="4">
    <location>
        <begin position="17"/>
        <end position="22"/>
    </location>
</feature>
<feature type="strand" evidence="4">
    <location>
        <begin position="28"/>
        <end position="35"/>
    </location>
</feature>
<feature type="helix" evidence="4">
    <location>
        <begin position="38"/>
        <end position="44"/>
    </location>
</feature>
<feature type="helix" evidence="4">
    <location>
        <begin position="46"/>
        <end position="56"/>
    </location>
</feature>
<feature type="strand" evidence="4">
    <location>
        <begin position="65"/>
        <end position="69"/>
    </location>
</feature>
<feature type="helix" evidence="4">
    <location>
        <begin position="70"/>
        <end position="72"/>
    </location>
</feature>
<feature type="strand" evidence="4">
    <location>
        <begin position="76"/>
        <end position="78"/>
    </location>
</feature>
<feature type="strand" evidence="4">
    <location>
        <begin position="82"/>
        <end position="88"/>
    </location>
</feature>
<feature type="helix" evidence="4">
    <location>
        <begin position="91"/>
        <end position="94"/>
    </location>
</feature>
<feature type="strand" evidence="4">
    <location>
        <begin position="100"/>
        <end position="104"/>
    </location>
</feature>
<feature type="strand" evidence="4">
    <location>
        <begin position="106"/>
        <end position="108"/>
    </location>
</feature>
<feature type="strand" evidence="4">
    <location>
        <begin position="111"/>
        <end position="114"/>
    </location>
</feature>
<feature type="strand" evidence="4">
    <location>
        <begin position="121"/>
        <end position="125"/>
    </location>
</feature>
<feature type="helix" evidence="4">
    <location>
        <begin position="126"/>
        <end position="134"/>
    </location>
</feature>
<feature type="strand" evidence="4">
    <location>
        <begin position="142"/>
        <end position="146"/>
    </location>
</feature>
<feature type="strand" evidence="4">
    <location>
        <begin position="148"/>
        <end position="157"/>
    </location>
</feature>
<feature type="strand" evidence="4">
    <location>
        <begin position="160"/>
        <end position="167"/>
    </location>
</feature>
<feature type="helix" evidence="4">
    <location>
        <begin position="169"/>
        <end position="179"/>
    </location>
</feature>
<feature type="helix" evidence="4">
    <location>
        <begin position="183"/>
        <end position="186"/>
    </location>
</feature>
<feature type="helix" evidence="4">
    <location>
        <begin position="197"/>
        <end position="208"/>
    </location>
</feature>
<feature type="helix" evidence="4">
    <location>
        <begin position="210"/>
        <end position="212"/>
    </location>
</feature>
<feature type="helix" evidence="4">
    <location>
        <begin position="213"/>
        <end position="227"/>
    </location>
</feature>
<feature type="helix" evidence="4">
    <location>
        <begin position="231"/>
        <end position="251"/>
    </location>
</feature>
<feature type="strand" evidence="4">
    <location>
        <begin position="259"/>
        <end position="264"/>
    </location>
</feature>
<feature type="helix" evidence="4">
    <location>
        <begin position="266"/>
        <end position="278"/>
    </location>
</feature>
<feature type="strand" evidence="4">
    <location>
        <begin position="282"/>
        <end position="287"/>
    </location>
</feature>
<feature type="helix" evidence="4">
    <location>
        <begin position="288"/>
        <end position="303"/>
    </location>
</feature>
<sequence>MTTAGYYAAVDWGTSSFRLWIIGEDGAVLAERRSAEGMTTAAKTGFHTILDGHLAAVSAPAHLPIIICGMAGARQGWKEAGYIETPAALAEIAGRATAIPDVDRDIRILPGLAQRDRRHPDVMRGEETQLLGAAAHLGAGSHLVCMPGTHSKWVRLADDRVEGFSTFMTGELFDTIARHTILSHAVAEADTFAAGSAAFTDAVSRTRENPALATNLLFSVRAGQLLHGTAAADARAQLSGTLIGLEIAGALAGSGSVDGVCLVGSGGLGTLYRTALESQGLNVRAVDADEAVRAGLSAAARAIWPL</sequence>
<proteinExistence type="evidence at protein level"/>
<comment type="function">
    <text evidence="1">Involved in the degradation of galactose via the DeLey-Doudoroff pathway.</text>
</comment>
<comment type="catalytic activity">
    <reaction>
        <text>2-dehydro-3-deoxy-D-galactonate + ATP = 2-dehydro-3-deoxy-6-phospho-D-galactonate + ADP + H(+)</text>
        <dbReference type="Rhea" id="RHEA:16525"/>
        <dbReference type="ChEBI" id="CHEBI:15378"/>
        <dbReference type="ChEBI" id="CHEBI:30616"/>
        <dbReference type="ChEBI" id="CHEBI:57989"/>
        <dbReference type="ChEBI" id="CHEBI:58298"/>
        <dbReference type="ChEBI" id="CHEBI:456216"/>
        <dbReference type="EC" id="2.7.1.58"/>
    </reaction>
</comment>
<comment type="pathway">
    <text>Carbohydrate acid metabolism; D-galactonate degradation; D-glyceraldehyde 3-phosphate and pyruvate from D-galactonate: step 2/3.</text>
</comment>
<comment type="disruption phenotype">
    <text evidence="2">Cells lacking this gene fail to grow on galactose as sole carbon source.</text>
</comment>
<comment type="similarity">
    <text evidence="3">Belongs to the DgoK family.</text>
</comment>
<evidence type="ECO:0000250" key="1"/>
<evidence type="ECO:0000269" key="2">
    <source>
    </source>
</evidence>
<evidence type="ECO:0000305" key="3"/>
<evidence type="ECO:0007829" key="4">
    <source>
        <dbReference type="PDB" id="3T69"/>
    </source>
</evidence>
<dbReference type="EC" id="2.7.1.58"/>
<dbReference type="EMBL" id="AL591688">
    <property type="protein sequence ID" value="CAC45397.1"/>
    <property type="molecule type" value="Genomic_DNA"/>
</dbReference>
<dbReference type="RefSeq" id="NP_384931.1">
    <property type="nucleotide sequence ID" value="NC_003047.1"/>
</dbReference>
<dbReference type="RefSeq" id="WP_010968850.1">
    <property type="nucleotide sequence ID" value="NC_003047.1"/>
</dbReference>
<dbReference type="PDB" id="3T69">
    <property type="method" value="X-ray"/>
    <property type="resolution" value="2.55 A"/>
    <property type="chains" value="A/B=1-306"/>
</dbReference>
<dbReference type="PDBsum" id="3T69"/>
<dbReference type="SMR" id="Q92RN7"/>
<dbReference type="EnsemblBacteria" id="CAC45397">
    <property type="protein sequence ID" value="CAC45397"/>
    <property type="gene ID" value="SMc00881"/>
</dbReference>
<dbReference type="KEGG" id="sme:SMc00881"/>
<dbReference type="PATRIC" id="fig|266834.11.peg.2215"/>
<dbReference type="eggNOG" id="COG3734">
    <property type="taxonomic scope" value="Bacteria"/>
</dbReference>
<dbReference type="HOGENOM" id="CLU_058005_2_0_5"/>
<dbReference type="OrthoDB" id="256574at2"/>
<dbReference type="UniPathway" id="UPA00081">
    <property type="reaction ID" value="UER00519"/>
</dbReference>
<dbReference type="EvolutionaryTrace" id="Q92RN7"/>
<dbReference type="Proteomes" id="UP000001976">
    <property type="component" value="Chromosome"/>
</dbReference>
<dbReference type="GO" id="GO:0008671">
    <property type="term" value="F:2-dehydro-3-deoxygalactonokinase activity"/>
    <property type="evidence" value="ECO:0007669"/>
    <property type="project" value="UniProtKB-EC"/>
</dbReference>
<dbReference type="GO" id="GO:0005524">
    <property type="term" value="F:ATP binding"/>
    <property type="evidence" value="ECO:0007669"/>
    <property type="project" value="UniProtKB-KW"/>
</dbReference>
<dbReference type="GO" id="GO:0034194">
    <property type="term" value="P:D-galactonate catabolic process"/>
    <property type="evidence" value="ECO:0007669"/>
    <property type="project" value="UniProtKB-UniPathway"/>
</dbReference>
<dbReference type="CDD" id="cd24012">
    <property type="entry name" value="ASKHA_NBD_KDGal-kinase"/>
    <property type="match status" value="1"/>
</dbReference>
<dbReference type="Gene3D" id="3.30.420.310">
    <property type="entry name" value="2-keto-3-deoxy-galactonokinase, C-terminal domain"/>
    <property type="match status" value="1"/>
</dbReference>
<dbReference type="Gene3D" id="3.30.420.300">
    <property type="entry name" value="2-keto-3-deoxy-galactonokinase, substrate binding domain"/>
    <property type="match status" value="1"/>
</dbReference>
<dbReference type="InterPro" id="IPR043129">
    <property type="entry name" value="ATPase_NBD"/>
</dbReference>
<dbReference type="InterPro" id="IPR007729">
    <property type="entry name" value="DGOK"/>
</dbReference>
<dbReference type="InterPro" id="IPR042257">
    <property type="entry name" value="DGOK_C"/>
</dbReference>
<dbReference type="InterPro" id="IPR042258">
    <property type="entry name" value="DGOK_N"/>
</dbReference>
<dbReference type="Pfam" id="PF05035">
    <property type="entry name" value="DGOK"/>
    <property type="match status" value="1"/>
</dbReference>
<dbReference type="SUPFAM" id="SSF53067">
    <property type="entry name" value="Actin-like ATPase domain"/>
    <property type="match status" value="1"/>
</dbReference>
<reference key="1">
    <citation type="journal article" date="2001" name="Proc. Natl. Acad. Sci. U.S.A.">
        <title>Analysis of the chromosome sequence of the legume symbiont Sinorhizobium meliloti strain 1021.</title>
        <authorList>
            <person name="Capela D."/>
            <person name="Barloy-Hubler F."/>
            <person name="Gouzy J."/>
            <person name="Bothe G."/>
            <person name="Ampe F."/>
            <person name="Batut J."/>
            <person name="Boistard P."/>
            <person name="Becker A."/>
            <person name="Boutry M."/>
            <person name="Cadieu E."/>
            <person name="Dreano S."/>
            <person name="Gloux S."/>
            <person name="Godrie T."/>
            <person name="Goffeau A."/>
            <person name="Kahn D."/>
            <person name="Kiss E."/>
            <person name="Lelaure V."/>
            <person name="Masuy D."/>
            <person name="Pohl T."/>
            <person name="Portetelle D."/>
            <person name="Puehler A."/>
            <person name="Purnelle B."/>
            <person name="Ramsperger U."/>
            <person name="Renard C."/>
            <person name="Thebault P."/>
            <person name="Vandenbol M."/>
            <person name="Weidner S."/>
            <person name="Galibert F."/>
        </authorList>
    </citation>
    <scope>NUCLEOTIDE SEQUENCE [LARGE SCALE GENOMIC DNA]</scope>
    <source>
        <strain>1021</strain>
    </source>
</reference>
<reference key="2">
    <citation type="journal article" date="2001" name="Science">
        <title>The composite genome of the legume symbiont Sinorhizobium meliloti.</title>
        <authorList>
            <person name="Galibert F."/>
            <person name="Finan T.M."/>
            <person name="Long S.R."/>
            <person name="Puehler A."/>
            <person name="Abola P."/>
            <person name="Ampe F."/>
            <person name="Barloy-Hubler F."/>
            <person name="Barnett M.J."/>
            <person name="Becker A."/>
            <person name="Boistard P."/>
            <person name="Bothe G."/>
            <person name="Boutry M."/>
            <person name="Bowser L."/>
            <person name="Buhrmester J."/>
            <person name="Cadieu E."/>
            <person name="Capela D."/>
            <person name="Chain P."/>
            <person name="Cowie A."/>
            <person name="Davis R.W."/>
            <person name="Dreano S."/>
            <person name="Federspiel N.A."/>
            <person name="Fisher R.F."/>
            <person name="Gloux S."/>
            <person name="Godrie T."/>
            <person name="Goffeau A."/>
            <person name="Golding B."/>
            <person name="Gouzy J."/>
            <person name="Gurjal M."/>
            <person name="Hernandez-Lucas I."/>
            <person name="Hong A."/>
            <person name="Huizar L."/>
            <person name="Hyman R.W."/>
            <person name="Jones T."/>
            <person name="Kahn D."/>
            <person name="Kahn M.L."/>
            <person name="Kalman S."/>
            <person name="Keating D.H."/>
            <person name="Kiss E."/>
            <person name="Komp C."/>
            <person name="Lelaure V."/>
            <person name="Masuy D."/>
            <person name="Palm C."/>
            <person name="Peck M.C."/>
            <person name="Pohl T.M."/>
            <person name="Portetelle D."/>
            <person name="Purnelle B."/>
            <person name="Ramsperger U."/>
            <person name="Surzycki R."/>
            <person name="Thebault P."/>
            <person name="Vandenbol M."/>
            <person name="Vorhoelter F.J."/>
            <person name="Weidner S."/>
            <person name="Wells D.H."/>
            <person name="Wong K."/>
            <person name="Yeh K.-C."/>
            <person name="Batut J."/>
        </authorList>
    </citation>
    <scope>NUCLEOTIDE SEQUENCE [LARGE SCALE GENOMIC DNA]</scope>
    <source>
        <strain>1021</strain>
    </source>
</reference>
<reference key="3">
    <citation type="journal article" date="2012" name="J. Bacteriol.">
        <title>Inability to catabolize galactose leads to increased ability to compete for nodule occupancy in Sinorhizobium meliloti.</title>
        <authorList>
            <person name="Geddes B.A."/>
            <person name="Oresnik I.J."/>
        </authorList>
    </citation>
    <scope>DISRUPTION PHENOTYPE</scope>
    <source>
        <strain>1021</strain>
    </source>
</reference>
<reference key="4">
    <citation type="submission" date="2011-07" db="PDB data bank">
        <title>Crystal structure of a putative 2-dehydro-3-deoxygalactonokinase protein from Sinorhizobium meliloti.</title>
        <authorList>
            <consortium name="New York Structural Genomics Research Consortium (NYSGRC)"/>
        </authorList>
    </citation>
    <scope>X-RAY CRYSTALLOGRAPHY (2.55 ANGSTROMS)</scope>
</reference>
<accession>Q92RN7</accession>
<name>DGOK_RHIME</name>